<reference key="1">
    <citation type="submission" date="2008-02" db="EMBL/GenBank/DDBJ databases">
        <title>Complete sequence of Shewanella woodyi ATCC 51908.</title>
        <authorList>
            <consortium name="US DOE Joint Genome Institute"/>
            <person name="Copeland A."/>
            <person name="Lucas S."/>
            <person name="Lapidus A."/>
            <person name="Glavina del Rio T."/>
            <person name="Dalin E."/>
            <person name="Tice H."/>
            <person name="Bruce D."/>
            <person name="Goodwin L."/>
            <person name="Pitluck S."/>
            <person name="Sims D."/>
            <person name="Brettin T."/>
            <person name="Detter J.C."/>
            <person name="Han C."/>
            <person name="Kuske C.R."/>
            <person name="Schmutz J."/>
            <person name="Larimer F."/>
            <person name="Land M."/>
            <person name="Hauser L."/>
            <person name="Kyrpides N."/>
            <person name="Lykidis A."/>
            <person name="Zhao J.-S."/>
            <person name="Richardson P."/>
        </authorList>
    </citation>
    <scope>NUCLEOTIDE SEQUENCE [LARGE SCALE GENOMIC DNA]</scope>
    <source>
        <strain>ATCC 51908 / MS32</strain>
    </source>
</reference>
<proteinExistence type="inferred from homology"/>
<feature type="chain" id="PRO_1000144484" description="Large ribosomal subunit protein bL17">
    <location>
        <begin position="1"/>
        <end position="132"/>
    </location>
</feature>
<protein>
    <recommendedName>
        <fullName evidence="1">Large ribosomal subunit protein bL17</fullName>
    </recommendedName>
    <alternativeName>
        <fullName evidence="2">50S ribosomal protein L17</fullName>
    </alternativeName>
</protein>
<sequence length="132" mass="14891">MRHRKSGRQLNRNSSHRQAMFRNMASSLVRHEVIKTTVAKAKELRRVVEPLITLAKSDSVANRRLAFARTRDAEVVGKLFNELGPRYQERPGGYTRILKCGLRTGDKAPMAYIELVGRPEDAEAVEADDSAE</sequence>
<organism>
    <name type="scientific">Shewanella woodyi (strain ATCC 51908 / MS32)</name>
    <dbReference type="NCBI Taxonomy" id="392500"/>
    <lineage>
        <taxon>Bacteria</taxon>
        <taxon>Pseudomonadati</taxon>
        <taxon>Pseudomonadota</taxon>
        <taxon>Gammaproteobacteria</taxon>
        <taxon>Alteromonadales</taxon>
        <taxon>Shewanellaceae</taxon>
        <taxon>Shewanella</taxon>
    </lineage>
</organism>
<keyword id="KW-1185">Reference proteome</keyword>
<keyword id="KW-0687">Ribonucleoprotein</keyword>
<keyword id="KW-0689">Ribosomal protein</keyword>
<gene>
    <name evidence="1" type="primary">rplQ</name>
    <name type="ordered locus">Swoo_4664</name>
</gene>
<comment type="subunit">
    <text evidence="1">Part of the 50S ribosomal subunit. Contacts protein L32.</text>
</comment>
<comment type="similarity">
    <text evidence="1">Belongs to the bacterial ribosomal protein bL17 family.</text>
</comment>
<dbReference type="EMBL" id="CP000961">
    <property type="protein sequence ID" value="ACA88914.1"/>
    <property type="molecule type" value="Genomic_DNA"/>
</dbReference>
<dbReference type="RefSeq" id="WP_012327238.1">
    <property type="nucleotide sequence ID" value="NC_010506.1"/>
</dbReference>
<dbReference type="SMR" id="B1KM34"/>
<dbReference type="STRING" id="392500.Swoo_4664"/>
<dbReference type="KEGG" id="swd:Swoo_4664"/>
<dbReference type="eggNOG" id="COG0203">
    <property type="taxonomic scope" value="Bacteria"/>
</dbReference>
<dbReference type="HOGENOM" id="CLU_074407_2_2_6"/>
<dbReference type="Proteomes" id="UP000002168">
    <property type="component" value="Chromosome"/>
</dbReference>
<dbReference type="GO" id="GO:0022625">
    <property type="term" value="C:cytosolic large ribosomal subunit"/>
    <property type="evidence" value="ECO:0007669"/>
    <property type="project" value="TreeGrafter"/>
</dbReference>
<dbReference type="GO" id="GO:0003735">
    <property type="term" value="F:structural constituent of ribosome"/>
    <property type="evidence" value="ECO:0007669"/>
    <property type="project" value="InterPro"/>
</dbReference>
<dbReference type="GO" id="GO:0006412">
    <property type="term" value="P:translation"/>
    <property type="evidence" value="ECO:0007669"/>
    <property type="project" value="UniProtKB-UniRule"/>
</dbReference>
<dbReference type="FunFam" id="3.90.1030.10:FF:000001">
    <property type="entry name" value="50S ribosomal protein L17"/>
    <property type="match status" value="1"/>
</dbReference>
<dbReference type="Gene3D" id="3.90.1030.10">
    <property type="entry name" value="Ribosomal protein L17"/>
    <property type="match status" value="1"/>
</dbReference>
<dbReference type="HAMAP" id="MF_01368">
    <property type="entry name" value="Ribosomal_bL17"/>
    <property type="match status" value="1"/>
</dbReference>
<dbReference type="InterPro" id="IPR000456">
    <property type="entry name" value="Ribosomal_bL17"/>
</dbReference>
<dbReference type="InterPro" id="IPR047859">
    <property type="entry name" value="Ribosomal_bL17_CS"/>
</dbReference>
<dbReference type="InterPro" id="IPR036373">
    <property type="entry name" value="Ribosomal_bL17_sf"/>
</dbReference>
<dbReference type="NCBIfam" id="TIGR00059">
    <property type="entry name" value="L17"/>
    <property type="match status" value="1"/>
</dbReference>
<dbReference type="PANTHER" id="PTHR14413:SF16">
    <property type="entry name" value="LARGE RIBOSOMAL SUBUNIT PROTEIN BL17M"/>
    <property type="match status" value="1"/>
</dbReference>
<dbReference type="PANTHER" id="PTHR14413">
    <property type="entry name" value="RIBOSOMAL PROTEIN L17"/>
    <property type="match status" value="1"/>
</dbReference>
<dbReference type="Pfam" id="PF01196">
    <property type="entry name" value="Ribosomal_L17"/>
    <property type="match status" value="1"/>
</dbReference>
<dbReference type="SUPFAM" id="SSF64263">
    <property type="entry name" value="Prokaryotic ribosomal protein L17"/>
    <property type="match status" value="1"/>
</dbReference>
<dbReference type="PROSITE" id="PS01167">
    <property type="entry name" value="RIBOSOMAL_L17"/>
    <property type="match status" value="1"/>
</dbReference>
<evidence type="ECO:0000255" key="1">
    <source>
        <dbReference type="HAMAP-Rule" id="MF_01368"/>
    </source>
</evidence>
<evidence type="ECO:0000305" key="2"/>
<accession>B1KM34</accession>
<name>RL17_SHEWM</name>